<accession>C3K4Q4</accession>
<feature type="chain" id="PRO_0000383384" description="Ribosomal RNA small subunit methyltransferase J">
    <location>
        <begin position="1"/>
        <end position="260"/>
    </location>
</feature>
<feature type="region of interest" description="Disordered" evidence="2">
    <location>
        <begin position="234"/>
        <end position="260"/>
    </location>
</feature>
<feature type="compositionally biased region" description="Basic and acidic residues" evidence="2">
    <location>
        <begin position="241"/>
        <end position="254"/>
    </location>
</feature>
<feature type="binding site" evidence="1">
    <location>
        <begin position="125"/>
        <end position="126"/>
    </location>
    <ligand>
        <name>S-adenosyl-L-methionine</name>
        <dbReference type="ChEBI" id="CHEBI:59789"/>
    </ligand>
</feature>
<feature type="binding site" evidence="1">
    <location>
        <position position="179"/>
    </location>
    <ligand>
        <name>S-adenosyl-L-methionine</name>
        <dbReference type="ChEBI" id="CHEBI:59789"/>
    </ligand>
</feature>
<proteinExistence type="inferred from homology"/>
<keyword id="KW-0963">Cytoplasm</keyword>
<keyword id="KW-0489">Methyltransferase</keyword>
<keyword id="KW-0698">rRNA processing</keyword>
<keyword id="KW-0949">S-adenosyl-L-methionine</keyword>
<keyword id="KW-0808">Transferase</keyword>
<dbReference type="EC" id="2.1.1.242" evidence="1"/>
<dbReference type="EMBL" id="AM181176">
    <property type="protein sequence ID" value="CAY47505.1"/>
    <property type="molecule type" value="Genomic_DNA"/>
</dbReference>
<dbReference type="RefSeq" id="WP_012722574.1">
    <property type="nucleotide sequence ID" value="NC_012660.1"/>
</dbReference>
<dbReference type="SMR" id="C3K4Q4"/>
<dbReference type="STRING" id="294.SRM1_04515"/>
<dbReference type="eggNOG" id="COG0742">
    <property type="taxonomic scope" value="Bacteria"/>
</dbReference>
<dbReference type="HOGENOM" id="CLU_076324_0_1_6"/>
<dbReference type="OrthoDB" id="3191794at2"/>
<dbReference type="GO" id="GO:0005737">
    <property type="term" value="C:cytoplasm"/>
    <property type="evidence" value="ECO:0007669"/>
    <property type="project" value="UniProtKB-SubCell"/>
</dbReference>
<dbReference type="GO" id="GO:0008990">
    <property type="term" value="F:rRNA (guanine-N2-)-methyltransferase activity"/>
    <property type="evidence" value="ECO:0007669"/>
    <property type="project" value="UniProtKB-UniRule"/>
</dbReference>
<dbReference type="Gene3D" id="3.40.50.150">
    <property type="entry name" value="Vaccinia Virus protein VP39"/>
    <property type="match status" value="1"/>
</dbReference>
<dbReference type="HAMAP" id="MF_01523">
    <property type="entry name" value="16SrRNA_methyltr_J"/>
    <property type="match status" value="1"/>
</dbReference>
<dbReference type="InterPro" id="IPR007536">
    <property type="entry name" value="16SrRNA_methylTrfase_J"/>
</dbReference>
<dbReference type="InterPro" id="IPR029063">
    <property type="entry name" value="SAM-dependent_MTases_sf"/>
</dbReference>
<dbReference type="PANTHER" id="PTHR36112">
    <property type="entry name" value="RIBOSOMAL RNA SMALL SUBUNIT METHYLTRANSFERASE J"/>
    <property type="match status" value="1"/>
</dbReference>
<dbReference type="PANTHER" id="PTHR36112:SF1">
    <property type="entry name" value="RIBOSOMAL RNA SMALL SUBUNIT METHYLTRANSFERASE J"/>
    <property type="match status" value="1"/>
</dbReference>
<dbReference type="Pfam" id="PF04445">
    <property type="entry name" value="SAM_MT"/>
    <property type="match status" value="1"/>
</dbReference>
<dbReference type="SUPFAM" id="SSF53335">
    <property type="entry name" value="S-adenosyl-L-methionine-dependent methyltransferases"/>
    <property type="match status" value="1"/>
</dbReference>
<gene>
    <name evidence="1" type="primary">rsmJ</name>
    <name type="ordered locus">PFLU_1248</name>
</gene>
<name>RSMJ_PSEFS</name>
<comment type="function">
    <text evidence="1">Specifically methylates the guanosine in position 1516 of 16S rRNA.</text>
</comment>
<comment type="catalytic activity">
    <reaction evidence="1">
        <text>guanosine(1516) in 16S rRNA + S-adenosyl-L-methionine = N(2)-methylguanosine(1516) in 16S rRNA + S-adenosyl-L-homocysteine + H(+)</text>
        <dbReference type="Rhea" id="RHEA:43220"/>
        <dbReference type="Rhea" id="RHEA-COMP:10412"/>
        <dbReference type="Rhea" id="RHEA-COMP:10413"/>
        <dbReference type="ChEBI" id="CHEBI:15378"/>
        <dbReference type="ChEBI" id="CHEBI:57856"/>
        <dbReference type="ChEBI" id="CHEBI:59789"/>
        <dbReference type="ChEBI" id="CHEBI:74269"/>
        <dbReference type="ChEBI" id="CHEBI:74481"/>
        <dbReference type="EC" id="2.1.1.242"/>
    </reaction>
</comment>
<comment type="subcellular location">
    <subcellularLocation>
        <location evidence="1">Cytoplasm</location>
    </subcellularLocation>
</comment>
<comment type="similarity">
    <text evidence="1">Belongs to the methyltransferase superfamily. RsmJ family.</text>
</comment>
<organism>
    <name type="scientific">Pseudomonas fluorescens (strain SBW25)</name>
    <dbReference type="NCBI Taxonomy" id="216595"/>
    <lineage>
        <taxon>Bacteria</taxon>
        <taxon>Pseudomonadati</taxon>
        <taxon>Pseudomonadota</taxon>
        <taxon>Gammaproteobacteria</taxon>
        <taxon>Pseudomonadales</taxon>
        <taxon>Pseudomonadaceae</taxon>
        <taxon>Pseudomonas</taxon>
    </lineage>
</organism>
<reference key="1">
    <citation type="journal article" date="2009" name="Genome Biol.">
        <title>Genomic and genetic analyses of diversity and plant interactions of Pseudomonas fluorescens.</title>
        <authorList>
            <person name="Silby M.W."/>
            <person name="Cerdeno-Tarraga A.M."/>
            <person name="Vernikos G.S."/>
            <person name="Giddens S.R."/>
            <person name="Jackson R.W."/>
            <person name="Preston G.M."/>
            <person name="Zhang X.-X."/>
            <person name="Moon C.D."/>
            <person name="Gehrig S.M."/>
            <person name="Godfrey S.A.C."/>
            <person name="Knight C.G."/>
            <person name="Malone J.G."/>
            <person name="Robinson Z."/>
            <person name="Spiers A.J."/>
            <person name="Harris S."/>
            <person name="Challis G.L."/>
            <person name="Yaxley A.M."/>
            <person name="Harris D."/>
            <person name="Seeger K."/>
            <person name="Murphy L."/>
            <person name="Rutter S."/>
            <person name="Squares R."/>
            <person name="Quail M.A."/>
            <person name="Saunders E."/>
            <person name="Mavromatis K."/>
            <person name="Brettin T.S."/>
            <person name="Bentley S.D."/>
            <person name="Hothersall J."/>
            <person name="Stephens E."/>
            <person name="Thomas C.M."/>
            <person name="Parkhill J."/>
            <person name="Levy S.B."/>
            <person name="Rainey P.B."/>
            <person name="Thomson N.R."/>
        </authorList>
    </citation>
    <scope>NUCLEOTIDE SEQUENCE [LARGE SCALE GENOMIC DNA]</scope>
    <source>
        <strain>SBW25</strain>
    </source>
</reference>
<evidence type="ECO:0000255" key="1">
    <source>
        <dbReference type="HAMAP-Rule" id="MF_01523"/>
    </source>
</evidence>
<evidence type="ECO:0000256" key="2">
    <source>
        <dbReference type="SAM" id="MobiDB-lite"/>
    </source>
</evidence>
<sequence>MSEQPAASRIQVEALGDGFKARAEQWASLLGLPLQLADADFSLQVGEHGLQLQQLGPDAPGPVRVDFVEGGAAHRRLYGGGSGQMIAKAVGIAQGVRPRVLDATAGLGKDAFVLASLGCEMSLIERQPLIGALLEDGLARGADDFEVAPIVARMQLLKGNSIDVMRNWEGEPPQVIYLDPMFPHREKTALVKKEMRLFRPLVGDDPDAPALLAAALALASHRVVVKRPRKAPCIDGPKPSHALDGKSSRYDIYPKKALKP</sequence>
<protein>
    <recommendedName>
        <fullName evidence="1">Ribosomal RNA small subunit methyltransferase J</fullName>
        <ecNumber evidence="1">2.1.1.242</ecNumber>
    </recommendedName>
    <alternativeName>
        <fullName evidence="1">16S rRNA m2G1516 methyltransferase</fullName>
    </alternativeName>
    <alternativeName>
        <fullName evidence="1">rRNA (guanine-N(2)-)-methyltransferase</fullName>
    </alternativeName>
</protein>